<proteinExistence type="inferred from homology"/>
<evidence type="ECO:0000250" key="1"/>
<evidence type="ECO:0000255" key="2"/>
<evidence type="ECO:0000256" key="3">
    <source>
        <dbReference type="SAM" id="MobiDB-lite"/>
    </source>
</evidence>
<evidence type="ECO:0000305" key="4"/>
<dbReference type="EMBL" id="AM410164">
    <property type="protein sequence ID" value="CAL68974.1"/>
    <property type="molecule type" value="Genomic_DNA"/>
</dbReference>
<dbReference type="SMR" id="A4H259"/>
<dbReference type="GO" id="GO:0005576">
    <property type="term" value="C:extracellular region"/>
    <property type="evidence" value="ECO:0007669"/>
    <property type="project" value="UniProtKB-SubCell"/>
</dbReference>
<dbReference type="GO" id="GO:0042742">
    <property type="term" value="P:defense response to bacterium"/>
    <property type="evidence" value="ECO:0007669"/>
    <property type="project" value="UniProtKB-KW"/>
</dbReference>
<feature type="signal peptide" evidence="2">
    <location>
        <begin position="1"/>
        <end position="19"/>
    </location>
</feature>
<feature type="chain" id="PRO_0000289855" description="Beta-defensin 129">
    <location>
        <begin position="20"/>
        <end position="173"/>
    </location>
</feature>
<feature type="region of interest" description="Disordered" evidence="3">
    <location>
        <begin position="144"/>
        <end position="173"/>
    </location>
</feature>
<feature type="compositionally biased region" description="Pro residues" evidence="3">
    <location>
        <begin position="159"/>
        <end position="173"/>
    </location>
</feature>
<feature type="disulfide bond" evidence="1">
    <location>
        <begin position="27"/>
        <end position="53"/>
    </location>
</feature>
<feature type="disulfide bond" evidence="1">
    <location>
        <begin position="34"/>
        <end position="48"/>
    </location>
</feature>
<feature type="disulfide bond" evidence="1">
    <location>
        <begin position="38"/>
        <end position="54"/>
    </location>
</feature>
<name>DB129_HYLLA</name>
<gene>
    <name type="primary">DEFB129</name>
</gene>
<sequence length="173" mass="19114">MKLLFPIFASLMLQYKVNTEFIGLRRCLMGFGRCRDHCNVDEKEIQKCKMKKCCVGPKVVKLIKNYLQYGTPNVLNEDVQEMLKSAKNSSAVIQRKHILSVLPQIKSTSFFANTNFVIIPNATPMNSAIISTVTPGQITYTAASTKSNIKESRDSATASPPPAPPPPNTLPTP</sequence>
<accession>A4H259</accession>
<reference key="1">
    <citation type="submission" date="2006-11" db="EMBL/GenBank/DDBJ databases">
        <title>Evolution and sequence variation of human beta-defensin genes.</title>
        <authorList>
            <person name="Hollox E.J."/>
            <person name="Armour J.A.L."/>
        </authorList>
    </citation>
    <scope>NUCLEOTIDE SEQUENCE [GENOMIC DNA]</scope>
</reference>
<organism>
    <name type="scientific">Hylobates lar</name>
    <name type="common">Lar gibbon</name>
    <name type="synonym">White-handed gibbon</name>
    <dbReference type="NCBI Taxonomy" id="9580"/>
    <lineage>
        <taxon>Eukaryota</taxon>
        <taxon>Metazoa</taxon>
        <taxon>Chordata</taxon>
        <taxon>Craniata</taxon>
        <taxon>Vertebrata</taxon>
        <taxon>Euteleostomi</taxon>
        <taxon>Mammalia</taxon>
        <taxon>Eutheria</taxon>
        <taxon>Euarchontoglires</taxon>
        <taxon>Primates</taxon>
        <taxon>Haplorrhini</taxon>
        <taxon>Catarrhini</taxon>
        <taxon>Hylobatidae</taxon>
        <taxon>Hylobates</taxon>
    </lineage>
</organism>
<keyword id="KW-0044">Antibiotic</keyword>
<keyword id="KW-0929">Antimicrobial</keyword>
<keyword id="KW-0211">Defensin</keyword>
<keyword id="KW-1015">Disulfide bond</keyword>
<keyword id="KW-0964">Secreted</keyword>
<keyword id="KW-0732">Signal</keyword>
<comment type="function">
    <text evidence="4">Has antibacterial activity.</text>
</comment>
<comment type="subcellular location">
    <subcellularLocation>
        <location evidence="4">Secreted</location>
    </subcellularLocation>
</comment>
<comment type="similarity">
    <text evidence="4">Belongs to the beta-defensin family.</text>
</comment>
<protein>
    <recommendedName>
        <fullName>Beta-defensin 129</fullName>
    </recommendedName>
    <alternativeName>
        <fullName>Defensin, beta 129</fullName>
    </alternativeName>
</protein>